<keyword id="KW-0067">ATP-binding</keyword>
<keyword id="KW-0963">Cytoplasm</keyword>
<keyword id="KW-0436">Ligase</keyword>
<keyword id="KW-0547">Nucleotide-binding</keyword>
<protein>
    <recommendedName>
        <fullName evidence="1">D-alanine--D-alanyl carrier protein ligase</fullName>
        <shortName evidence="1">DCL</shortName>
        <ecNumber evidence="1">6.2.1.54</ecNumber>
    </recommendedName>
    <alternativeName>
        <fullName evidence="1">D-alanine--poly(phosphoribitol) ligase subunit 1</fullName>
    </alternativeName>
    <alternativeName>
        <fullName evidence="1">D-alanine-activating enzyme</fullName>
        <shortName evidence="1">DAE</shortName>
    </alternativeName>
</protein>
<accession>Q8VM67</accession>
<feature type="chain" id="PRO_0000213160" description="D-alanine--D-alanyl carrier protein ligase">
    <location>
        <begin position="1"/>
        <end position="511"/>
    </location>
</feature>
<feature type="binding site" evidence="1">
    <location>
        <begin position="152"/>
        <end position="153"/>
    </location>
    <ligand>
        <name>ATP</name>
        <dbReference type="ChEBI" id="CHEBI:30616"/>
    </ligand>
</feature>
<feature type="binding site" evidence="1">
    <location>
        <position position="199"/>
    </location>
    <ligand>
        <name>D-alanine</name>
        <dbReference type="ChEBI" id="CHEBI:57416"/>
    </ligand>
</feature>
<feature type="binding site" evidence="1">
    <location>
        <begin position="294"/>
        <end position="299"/>
    </location>
    <ligand>
        <name>ATP</name>
        <dbReference type="ChEBI" id="CHEBI:30616"/>
    </ligand>
</feature>
<feature type="binding site" evidence="1">
    <location>
        <position position="303"/>
    </location>
    <ligand>
        <name>D-alanine</name>
        <dbReference type="ChEBI" id="CHEBI:57416"/>
    </ligand>
</feature>
<feature type="binding site" evidence="1">
    <location>
        <position position="385"/>
    </location>
    <ligand>
        <name>ATP</name>
        <dbReference type="ChEBI" id="CHEBI:30616"/>
    </ligand>
</feature>
<feature type="binding site" evidence="1">
    <location>
        <begin position="397"/>
        <end position="400"/>
    </location>
    <ligand>
        <name>ATP</name>
        <dbReference type="ChEBI" id="CHEBI:30616"/>
    </ligand>
</feature>
<feature type="binding site" evidence="1">
    <location>
        <position position="499"/>
    </location>
    <ligand>
        <name>ATP</name>
        <dbReference type="ChEBI" id="CHEBI:30616"/>
    </ligand>
</feature>
<feature type="binding site" evidence="1">
    <location>
        <position position="499"/>
    </location>
    <ligand>
        <name>D-alanine</name>
        <dbReference type="ChEBI" id="CHEBI:57416"/>
    </ligand>
</feature>
<feature type="sequence conflict" description="In Ref. 1; CAC83085." evidence="2" ref="1">
    <original>V</original>
    <variation>I</variation>
    <location>
        <position position="238"/>
    </location>
</feature>
<evidence type="ECO:0000255" key="1">
    <source>
        <dbReference type="HAMAP-Rule" id="MF_00593"/>
    </source>
</evidence>
<evidence type="ECO:0000305" key="2"/>
<sequence>MIHDMIKTIEHFAETQADFPVYDILGEVHTYGQLKVDSDSLAAHIDSLGLVEKSPVLVFGGQEYEMLATFVALTKSGHAYIPVDQHSALDRIQAIMTVAQPSLIISIGEFPLEVDNVPILDVSQVSAIFEEKTPYEVTHSVKGDDNYYIIFTSGTTGLPKGVQISHDNLLSFTNWMISDDEFSVPERPQMLAQPPYSFDLSVMYWAPTLAMGGTLFALPKTVVNDFKKLFATINELPVQVWTSTPSFADMALLSNDFNSETLPQLTHFYFDGEELTVKTAQKLRQRFPKARIVNAYGPTEATVALSAVAITDEMLETCKRLPIGYTKDDSPTYVIDEEGHKLPNGEQGEIIIAGPAVSKGYLNNPEKTAEAFFQFEGLPAYHTGDLGSMTDEGLLLYGGRMDFQIKFNGYRIELEDVSQNLNKSQYVKSAVAVPRYNKDHKVQNLLAYIVLKEGVRDDFERDLDLTKAIKEDLKDIMMDYMMPSKFIYREDLPLTPNGKIDIKGLMSEVNK</sequence>
<organism>
    <name type="scientific">Streptococcus agalactiae serotype III (strain NEM316)</name>
    <dbReference type="NCBI Taxonomy" id="211110"/>
    <lineage>
        <taxon>Bacteria</taxon>
        <taxon>Bacillati</taxon>
        <taxon>Bacillota</taxon>
        <taxon>Bacilli</taxon>
        <taxon>Lactobacillales</taxon>
        <taxon>Streptococcaceae</taxon>
        <taxon>Streptococcus</taxon>
    </lineage>
</organism>
<proteinExistence type="inferred from homology"/>
<gene>
    <name evidence="1" type="primary">dltA</name>
    <name type="ordered locus">gbs1833</name>
</gene>
<reference key="1">
    <citation type="journal article" date="2001" name="J. Bacteriol.">
        <title>Regulation of D-alanyl-lipoteichoic acid biosynthesis in Streptococcus agalactiae involves a novel two-component regulatory system.</title>
        <authorList>
            <person name="Poyart C."/>
            <person name="Lamy M.C."/>
            <person name="Boumaila C."/>
            <person name="Fiedler F."/>
            <person name="Trieu-Cuot P."/>
        </authorList>
    </citation>
    <scope>NUCLEOTIDE SEQUENCE [GENOMIC DNA]</scope>
    <source>
        <strain>NEM316</strain>
    </source>
</reference>
<reference key="2">
    <citation type="journal article" date="2002" name="Mol. Microbiol.">
        <title>Genome sequence of Streptococcus agalactiae, a pathogen causing invasive neonatal disease.</title>
        <authorList>
            <person name="Glaser P."/>
            <person name="Rusniok C."/>
            <person name="Buchrieser C."/>
            <person name="Chevalier F."/>
            <person name="Frangeul L."/>
            <person name="Msadek T."/>
            <person name="Zouine M."/>
            <person name="Couve E."/>
            <person name="Lalioui L."/>
            <person name="Poyart C."/>
            <person name="Trieu-Cuot P."/>
            <person name="Kunst F."/>
        </authorList>
    </citation>
    <scope>NUCLEOTIDE SEQUENCE [LARGE SCALE GENOMIC DNA]</scope>
    <source>
        <strain>NEM316</strain>
    </source>
</reference>
<dbReference type="EC" id="6.2.1.54" evidence="1"/>
<dbReference type="EMBL" id="AJ291784">
    <property type="protein sequence ID" value="CAC83085.1"/>
    <property type="molecule type" value="Genomic_DNA"/>
</dbReference>
<dbReference type="EMBL" id="AL766853">
    <property type="protein sequence ID" value="CAD47492.1"/>
    <property type="molecule type" value="Genomic_DNA"/>
</dbReference>
<dbReference type="RefSeq" id="WP_000581013.1">
    <property type="nucleotide sequence ID" value="NC_004368.1"/>
</dbReference>
<dbReference type="SMR" id="Q8VM67"/>
<dbReference type="KEGG" id="san:gbs1833"/>
<dbReference type="eggNOG" id="COG1020">
    <property type="taxonomic scope" value="Bacteria"/>
</dbReference>
<dbReference type="HOGENOM" id="CLU_000022_2_12_9"/>
<dbReference type="UniPathway" id="UPA00556"/>
<dbReference type="Proteomes" id="UP000000823">
    <property type="component" value="Chromosome"/>
</dbReference>
<dbReference type="GO" id="GO:0005737">
    <property type="term" value="C:cytoplasm"/>
    <property type="evidence" value="ECO:0007669"/>
    <property type="project" value="UniProtKB-SubCell"/>
</dbReference>
<dbReference type="GO" id="GO:0005524">
    <property type="term" value="F:ATP binding"/>
    <property type="evidence" value="ECO:0007669"/>
    <property type="project" value="UniProtKB-KW"/>
</dbReference>
<dbReference type="GO" id="GO:0047473">
    <property type="term" value="F:D-alanine [D-alanyl carrier protein] ligase activity"/>
    <property type="evidence" value="ECO:0007669"/>
    <property type="project" value="UniProtKB-UniRule"/>
</dbReference>
<dbReference type="GO" id="GO:0070395">
    <property type="term" value="P:lipoteichoic acid biosynthetic process"/>
    <property type="evidence" value="ECO:0007669"/>
    <property type="project" value="UniProtKB-UniRule"/>
</dbReference>
<dbReference type="CDD" id="cd05945">
    <property type="entry name" value="DltA"/>
    <property type="match status" value="1"/>
</dbReference>
<dbReference type="FunFam" id="3.30.300.30:FF:000012">
    <property type="entry name" value="D-alanine--D-alanyl carrier protein ligase"/>
    <property type="match status" value="1"/>
</dbReference>
<dbReference type="Gene3D" id="3.30.300.30">
    <property type="match status" value="1"/>
</dbReference>
<dbReference type="Gene3D" id="3.40.50.12780">
    <property type="entry name" value="N-terminal domain of ligase-like"/>
    <property type="match status" value="1"/>
</dbReference>
<dbReference type="HAMAP" id="MF_00593">
    <property type="entry name" value="DltA"/>
    <property type="match status" value="1"/>
</dbReference>
<dbReference type="InterPro" id="IPR010071">
    <property type="entry name" value="AA_adenyl_dom"/>
</dbReference>
<dbReference type="InterPro" id="IPR025110">
    <property type="entry name" value="AMP-bd_C"/>
</dbReference>
<dbReference type="InterPro" id="IPR045851">
    <property type="entry name" value="AMP-bd_C_sf"/>
</dbReference>
<dbReference type="InterPro" id="IPR020845">
    <property type="entry name" value="AMP-binding_CS"/>
</dbReference>
<dbReference type="InterPro" id="IPR000873">
    <property type="entry name" value="AMP-dep_synth/lig_dom"/>
</dbReference>
<dbReference type="InterPro" id="IPR042099">
    <property type="entry name" value="ANL_N_sf"/>
</dbReference>
<dbReference type="InterPro" id="IPR010072">
    <property type="entry name" value="DltA"/>
</dbReference>
<dbReference type="InterPro" id="IPR044507">
    <property type="entry name" value="DltA-like"/>
</dbReference>
<dbReference type="NCBIfam" id="TIGR01733">
    <property type="entry name" value="AA-adenyl-dom"/>
    <property type="match status" value="1"/>
</dbReference>
<dbReference type="NCBIfam" id="TIGR01734">
    <property type="entry name" value="D-ala-DACP-lig"/>
    <property type="match status" value="1"/>
</dbReference>
<dbReference type="NCBIfam" id="NF003417">
    <property type="entry name" value="PRK04813.1"/>
    <property type="match status" value="1"/>
</dbReference>
<dbReference type="PANTHER" id="PTHR45398">
    <property type="match status" value="1"/>
</dbReference>
<dbReference type="PANTHER" id="PTHR45398:SF1">
    <property type="entry name" value="ENZYME, PUTATIVE (JCVI)-RELATED"/>
    <property type="match status" value="1"/>
</dbReference>
<dbReference type="Pfam" id="PF00501">
    <property type="entry name" value="AMP-binding"/>
    <property type="match status" value="1"/>
</dbReference>
<dbReference type="Pfam" id="PF13193">
    <property type="entry name" value="AMP-binding_C"/>
    <property type="match status" value="1"/>
</dbReference>
<dbReference type="SUPFAM" id="SSF56801">
    <property type="entry name" value="Acetyl-CoA synthetase-like"/>
    <property type="match status" value="1"/>
</dbReference>
<dbReference type="PROSITE" id="PS00455">
    <property type="entry name" value="AMP_BINDING"/>
    <property type="match status" value="1"/>
</dbReference>
<name>DLTA_STRA3</name>
<comment type="function">
    <text evidence="1">Catalyzes the first step in the D-alanylation of lipoteichoic acid (LTA), the activation of D-alanine and its transfer onto the D-alanyl carrier protein (Dcp) DltC. In an ATP-dependent two-step reaction, forms a high energy D-alanyl-AMP intermediate, followed by transfer of the D-alanyl residue as a thiol ester to the phosphopantheinyl prosthetic group of the Dcp. D-alanylation of LTA plays an important role in modulating the properties of the cell wall in Gram-positive bacteria, influencing the net charge of the cell wall.</text>
</comment>
<comment type="catalytic activity">
    <reaction evidence="1">
        <text>holo-[D-alanyl-carrier protein] + D-alanine + ATP = D-alanyl-[D-alanyl-carrier protein] + AMP + diphosphate</text>
        <dbReference type="Rhea" id="RHEA:55132"/>
        <dbReference type="Rhea" id="RHEA-COMP:14102"/>
        <dbReference type="Rhea" id="RHEA-COMP:14103"/>
        <dbReference type="ChEBI" id="CHEBI:30616"/>
        <dbReference type="ChEBI" id="CHEBI:33019"/>
        <dbReference type="ChEBI" id="CHEBI:57416"/>
        <dbReference type="ChEBI" id="CHEBI:64479"/>
        <dbReference type="ChEBI" id="CHEBI:138620"/>
        <dbReference type="ChEBI" id="CHEBI:456215"/>
        <dbReference type="EC" id="6.2.1.54"/>
    </reaction>
</comment>
<comment type="pathway">
    <text evidence="1">Cell wall biogenesis; lipoteichoic acid biosynthesis.</text>
</comment>
<comment type="subcellular location">
    <subcellularLocation>
        <location evidence="1">Cytoplasm</location>
    </subcellularLocation>
</comment>
<comment type="similarity">
    <text evidence="1">Belongs to the ATP-dependent AMP-binding enzyme family. DltA subfamily.</text>
</comment>